<evidence type="ECO:0000250" key="1">
    <source>
        <dbReference type="UniProtKB" id="P05366"/>
    </source>
</evidence>
<evidence type="ECO:0000250" key="2">
    <source>
        <dbReference type="UniProtKB" id="P0DJI8"/>
    </source>
</evidence>
<evidence type="ECO:0000250" key="3">
    <source>
        <dbReference type="UniProtKB" id="P35542"/>
    </source>
</evidence>
<evidence type="ECO:0000255" key="4"/>
<evidence type="ECO:0000256" key="5">
    <source>
        <dbReference type="SAM" id="MobiDB-lite"/>
    </source>
</evidence>
<evidence type="ECO:0000305" key="6"/>
<dbReference type="EMBL" id="BC109725">
    <property type="protein sequence ID" value="AAI09726.1"/>
    <property type="molecule type" value="mRNA"/>
</dbReference>
<dbReference type="RefSeq" id="NP_001035595.1">
    <property type="nucleotide sequence ID" value="NM_001040505.2"/>
</dbReference>
<dbReference type="SMR" id="Q32L76"/>
<dbReference type="FunCoup" id="Q32L76">
    <property type="interactions" value="25"/>
</dbReference>
<dbReference type="STRING" id="9913.ENSBTAP00000003858"/>
<dbReference type="PaxDb" id="9913-ENSBTAP00000003858"/>
<dbReference type="Ensembl" id="ENSBTAT00000003858.3">
    <property type="protein sequence ID" value="ENSBTAP00000003858.2"/>
    <property type="gene ID" value="ENSBTAG00000002963.4"/>
</dbReference>
<dbReference type="GeneID" id="505308"/>
<dbReference type="KEGG" id="bta:505308"/>
<dbReference type="CTD" id="6291"/>
<dbReference type="VEuPathDB" id="HostDB:ENSBTAG00000002963"/>
<dbReference type="eggNOG" id="ENOG502S4PB">
    <property type="taxonomic scope" value="Eukaryota"/>
</dbReference>
<dbReference type="GeneTree" id="ENSGT00390000004737"/>
<dbReference type="HOGENOM" id="CLU_129936_0_0_1"/>
<dbReference type="InParanoid" id="Q32L76"/>
<dbReference type="OMA" id="GWFSFFK"/>
<dbReference type="OrthoDB" id="6112826at2759"/>
<dbReference type="TreeFam" id="TF332544"/>
<dbReference type="Proteomes" id="UP000009136">
    <property type="component" value="Chromosome 29"/>
</dbReference>
<dbReference type="Bgee" id="ENSBTAG00000002963">
    <property type="expression patterns" value="Expressed in semen and 30 other cell types or tissues"/>
</dbReference>
<dbReference type="GO" id="GO:0034364">
    <property type="term" value="C:high-density lipoprotein particle"/>
    <property type="evidence" value="ECO:0007669"/>
    <property type="project" value="UniProtKB-KW"/>
</dbReference>
<dbReference type="GO" id="GO:0006953">
    <property type="term" value="P:acute-phase response"/>
    <property type="evidence" value="ECO:0007669"/>
    <property type="project" value="UniProtKB-KW"/>
</dbReference>
<dbReference type="FunFam" id="1.10.132.110:FF:000001">
    <property type="entry name" value="Serum amyloid A protein"/>
    <property type="match status" value="1"/>
</dbReference>
<dbReference type="Gene3D" id="1.10.132.110">
    <property type="entry name" value="Serum amyloid A protein"/>
    <property type="match status" value="1"/>
</dbReference>
<dbReference type="InterPro" id="IPR000096">
    <property type="entry name" value="Serum_amyloid_A"/>
</dbReference>
<dbReference type="InterPro" id="IPR052464">
    <property type="entry name" value="Synovial_Prolif_Regulator"/>
</dbReference>
<dbReference type="PANTHER" id="PTHR23424">
    <property type="entry name" value="SERUM AMYLOID A"/>
    <property type="match status" value="1"/>
</dbReference>
<dbReference type="PANTHER" id="PTHR23424:SF29">
    <property type="entry name" value="SERUM AMYLOID A PROTEIN"/>
    <property type="match status" value="1"/>
</dbReference>
<dbReference type="Pfam" id="PF00277">
    <property type="entry name" value="SAA"/>
    <property type="match status" value="1"/>
</dbReference>
<dbReference type="PIRSF" id="PIRSF002472">
    <property type="entry name" value="Serum_amyloid_A"/>
    <property type="match status" value="1"/>
</dbReference>
<dbReference type="PRINTS" id="PR00306">
    <property type="entry name" value="SERUMAMYLOID"/>
</dbReference>
<dbReference type="SMART" id="SM00197">
    <property type="entry name" value="SAA"/>
    <property type="match status" value="1"/>
</dbReference>
<dbReference type="PROSITE" id="PS00992">
    <property type="entry name" value="SAA"/>
    <property type="match status" value="1"/>
</dbReference>
<keyword id="KW-0011">Acute phase</keyword>
<keyword id="KW-0345">HDL</keyword>
<keyword id="KW-1185">Reference proteome</keyword>
<keyword id="KW-0964">Secreted</keyword>
<keyword id="KW-0732">Signal</keyword>
<feature type="signal peptide" evidence="4">
    <location>
        <begin position="1"/>
        <end position="18"/>
    </location>
</feature>
<feature type="chain" id="PRO_0000282886" description="Serum amyloid A-4 protein">
    <location>
        <begin position="19"/>
        <end position="129"/>
    </location>
</feature>
<feature type="region of interest" description="Disordered" evidence="5">
    <location>
        <begin position="107"/>
        <end position="129"/>
    </location>
</feature>
<feature type="compositionally biased region" description="Basic and acidic residues" evidence="5">
    <location>
        <begin position="107"/>
        <end position="121"/>
    </location>
</feature>
<organism>
    <name type="scientific">Bos taurus</name>
    <name type="common">Bovine</name>
    <dbReference type="NCBI Taxonomy" id="9913"/>
    <lineage>
        <taxon>Eukaryota</taxon>
        <taxon>Metazoa</taxon>
        <taxon>Chordata</taxon>
        <taxon>Craniata</taxon>
        <taxon>Vertebrata</taxon>
        <taxon>Euteleostomi</taxon>
        <taxon>Mammalia</taxon>
        <taxon>Eutheria</taxon>
        <taxon>Laurasiatheria</taxon>
        <taxon>Artiodactyla</taxon>
        <taxon>Ruminantia</taxon>
        <taxon>Pecora</taxon>
        <taxon>Bovidae</taxon>
        <taxon>Bovinae</taxon>
        <taxon>Bos</taxon>
    </lineage>
</organism>
<reference key="1">
    <citation type="submission" date="2005-11" db="EMBL/GenBank/DDBJ databases">
        <authorList>
            <consortium name="NIH - Mammalian Gene Collection (MGC) project"/>
        </authorList>
    </citation>
    <scope>NUCLEOTIDE SEQUENCE [LARGE SCALE MRNA]</scope>
    <source>
        <strain>Crossbred X Angus</strain>
        <tissue>Liver</tissue>
    </source>
</reference>
<proteinExistence type="evidence at transcript level"/>
<comment type="function">
    <text evidence="1">Major acute phase reactant.</text>
</comment>
<comment type="subunit">
    <text evidence="2">Apolipoprotein of the HDL complex.</text>
</comment>
<comment type="subcellular location">
    <subcellularLocation>
        <location evidence="2">Secreted</location>
    </subcellularLocation>
</comment>
<comment type="similarity">
    <text evidence="6">Belongs to the SAA family.</text>
</comment>
<sequence length="129" mass="14688">MKLLIGILFCTLIMGVTGDSWYSFFKEAVQGASDLWRAYWDMRDANVQNSGRYFRARGNYEAAQRGPGGVWAAKIISNVGEYLQGFLYQIYLGDSYGLEDQVSNRRAEEWGRSGQDPDHFRPAGLPKKY</sequence>
<protein>
    <recommendedName>
        <fullName evidence="3">Serum amyloid A-4 protein</fullName>
    </recommendedName>
</protein>
<accession>Q32L76</accession>
<gene>
    <name evidence="3" type="primary">SAA4</name>
</gene>
<name>SAA4_BOVIN</name>